<feature type="chain" id="PRO_0000332935" description="Nucleoredoxin">
    <location>
        <begin position="1"/>
        <end position="418"/>
    </location>
</feature>
<feature type="domain" description="Thioredoxin" evidence="3">
    <location>
        <begin position="109"/>
        <end position="309"/>
    </location>
</feature>
<keyword id="KW-0963">Cytoplasm</keyword>
<keyword id="KW-0217">Developmental protein</keyword>
<keyword id="KW-0221">Differentiation</keyword>
<keyword id="KW-0520">NAD</keyword>
<keyword id="KW-0539">Nucleus</keyword>
<keyword id="KW-0560">Oxidoreductase</keyword>
<keyword id="KW-1185">Reference proteome</keyword>
<keyword id="KW-0879">Wnt signaling pathway</keyword>
<sequence length="418" mass="47410">MSEFLVNLLGERLVNGEKAEVDVQALGSRLSLLGLYFGCSLNGPCKQFNASLTEFYSKFKKSSEHKDKLEIVFISSDQDQKQWQDFLQEMQWPALPFKDRHKKMKLWNKYKVTSIPSLVFIDAATGKVVCRNGLLVVRDDPKGLEFPWGPKPFAEVVSGPLLRNNRQTTDSTALEGSYVGVYFSAHWCPPCRSLTRVLVESYRKVKETGQKFEIVFVSADRSEESFTQYFSEMPWLAVPYSDEARRSRLNRLYGIQGIPTLILLDTEGHMITRQGRVEILNDPDCGLFPWHPRPVLELSESNAVQLHEGPCLVLFVDAEEEGELDPAKELIQPIAEKIMAKYKAKEEETPLLFFVAGEDDMSDSLRDYTNLPEAAPLLTILDMSARAKYVKDVEEITPAVVEQFVSGFLAEKLKPEPI</sequence>
<comment type="function">
    <text evidence="1">Functions as a redox-dependent negative regulator of the Wnt signaling pathway.</text>
</comment>
<comment type="catalytic activity">
    <reaction>
        <text>[protein]-dithiol + NAD(+) = [protein]-disulfide + NADH + H(+)</text>
        <dbReference type="Rhea" id="RHEA:18749"/>
        <dbReference type="Rhea" id="RHEA-COMP:10593"/>
        <dbReference type="Rhea" id="RHEA-COMP:10594"/>
        <dbReference type="ChEBI" id="CHEBI:15378"/>
        <dbReference type="ChEBI" id="CHEBI:29950"/>
        <dbReference type="ChEBI" id="CHEBI:50058"/>
        <dbReference type="ChEBI" id="CHEBI:57540"/>
        <dbReference type="ChEBI" id="CHEBI:57945"/>
        <dbReference type="EC" id="1.8.1.8"/>
    </reaction>
</comment>
<comment type="catalytic activity">
    <reaction>
        <text>[protein]-dithiol + NADP(+) = [protein]-disulfide + NADPH + H(+)</text>
        <dbReference type="Rhea" id="RHEA:18753"/>
        <dbReference type="Rhea" id="RHEA-COMP:10593"/>
        <dbReference type="Rhea" id="RHEA-COMP:10594"/>
        <dbReference type="ChEBI" id="CHEBI:15378"/>
        <dbReference type="ChEBI" id="CHEBI:29950"/>
        <dbReference type="ChEBI" id="CHEBI:50058"/>
        <dbReference type="ChEBI" id="CHEBI:57783"/>
        <dbReference type="ChEBI" id="CHEBI:58349"/>
        <dbReference type="EC" id="1.8.1.8"/>
    </reaction>
</comment>
<comment type="subcellular location">
    <subcellularLocation>
        <location evidence="2">Cytoplasm</location>
        <location evidence="2">Cytosol</location>
    </subcellularLocation>
    <subcellularLocation>
        <location evidence="2">Nucleus</location>
    </subcellularLocation>
</comment>
<comment type="similarity">
    <text evidence="4">Belongs to the nucleoredoxin family.</text>
</comment>
<dbReference type="EC" id="1.8.1.8"/>
<dbReference type="EMBL" id="BC095273">
    <property type="protein sequence ID" value="AAH95273.1"/>
    <property type="molecule type" value="mRNA"/>
</dbReference>
<dbReference type="RefSeq" id="NP_001018431.1">
    <property type="nucleotide sequence ID" value="NM_001020595.1"/>
</dbReference>
<dbReference type="FunCoup" id="Q503L9">
    <property type="interactions" value="459"/>
</dbReference>
<dbReference type="STRING" id="7955.ENSDARP00000037350"/>
<dbReference type="PaxDb" id="7955-ENSDARP00000037350"/>
<dbReference type="GeneID" id="553621"/>
<dbReference type="KEGG" id="dre:553621"/>
<dbReference type="AGR" id="ZFIN:ZDB-GENE-050522-75"/>
<dbReference type="CTD" id="64359"/>
<dbReference type="ZFIN" id="ZDB-GENE-050522-75">
    <property type="gene designation" value="nxn"/>
</dbReference>
<dbReference type="eggNOG" id="KOG2501">
    <property type="taxonomic scope" value="Eukaryota"/>
</dbReference>
<dbReference type="InParanoid" id="Q503L9"/>
<dbReference type="OrthoDB" id="9440957at2759"/>
<dbReference type="PhylomeDB" id="Q503L9"/>
<dbReference type="PRO" id="PR:Q503L9"/>
<dbReference type="Proteomes" id="UP000000437">
    <property type="component" value="Alternate scaffold 15"/>
</dbReference>
<dbReference type="Proteomes" id="UP000000437">
    <property type="component" value="Chromosome 15"/>
</dbReference>
<dbReference type="GO" id="GO:0005829">
    <property type="term" value="C:cytosol"/>
    <property type="evidence" value="ECO:0007669"/>
    <property type="project" value="UniProtKB-SubCell"/>
</dbReference>
<dbReference type="GO" id="GO:0005634">
    <property type="term" value="C:nucleus"/>
    <property type="evidence" value="ECO:0000318"/>
    <property type="project" value="GO_Central"/>
</dbReference>
<dbReference type="GO" id="GO:0004791">
    <property type="term" value="F:thioredoxin-disulfide reductase (NADPH) activity"/>
    <property type="evidence" value="ECO:0000318"/>
    <property type="project" value="GO_Central"/>
</dbReference>
<dbReference type="GO" id="GO:0030154">
    <property type="term" value="P:cell differentiation"/>
    <property type="evidence" value="ECO:0007669"/>
    <property type="project" value="UniProtKB-KW"/>
</dbReference>
<dbReference type="GO" id="GO:0072359">
    <property type="term" value="P:circulatory system development"/>
    <property type="evidence" value="ECO:0000250"/>
    <property type="project" value="UniProtKB"/>
</dbReference>
<dbReference type="GO" id="GO:0031397">
    <property type="term" value="P:negative regulation of protein ubiquitination"/>
    <property type="evidence" value="ECO:0000250"/>
    <property type="project" value="UniProtKB"/>
</dbReference>
<dbReference type="GO" id="GO:0030178">
    <property type="term" value="P:negative regulation of Wnt signaling pathway"/>
    <property type="evidence" value="ECO:0000250"/>
    <property type="project" value="UniProtKB"/>
</dbReference>
<dbReference type="GO" id="GO:0016055">
    <property type="term" value="P:Wnt signaling pathway"/>
    <property type="evidence" value="ECO:0007669"/>
    <property type="project" value="UniProtKB-KW"/>
</dbReference>
<dbReference type="CDD" id="cd03009">
    <property type="entry name" value="TryX_like_TryX_NRX"/>
    <property type="match status" value="1"/>
</dbReference>
<dbReference type="FunFam" id="3.40.30.10:FF:000062">
    <property type="entry name" value="Nucleoredoxin"/>
    <property type="match status" value="1"/>
</dbReference>
<dbReference type="FunFam" id="3.40.30.10:FF:000064">
    <property type="entry name" value="Nucleoredoxin"/>
    <property type="match status" value="1"/>
</dbReference>
<dbReference type="FunFam" id="3.40.30.10:FF:000210">
    <property type="entry name" value="nucleoredoxin"/>
    <property type="match status" value="1"/>
</dbReference>
<dbReference type="Gene3D" id="3.40.30.10">
    <property type="entry name" value="Glutaredoxin"/>
    <property type="match status" value="3"/>
</dbReference>
<dbReference type="InterPro" id="IPR012336">
    <property type="entry name" value="Thioredoxin-like_fold"/>
</dbReference>
<dbReference type="InterPro" id="IPR036249">
    <property type="entry name" value="Thioredoxin-like_sf"/>
</dbReference>
<dbReference type="InterPro" id="IPR013766">
    <property type="entry name" value="Thioredoxin_domain"/>
</dbReference>
<dbReference type="InterPro" id="IPR045870">
    <property type="entry name" value="TryX_NRX_thioredoxin_dom"/>
</dbReference>
<dbReference type="PANTHER" id="PTHR46472">
    <property type="entry name" value="NUCLEOREDOXIN"/>
    <property type="match status" value="1"/>
</dbReference>
<dbReference type="PANTHER" id="PTHR46472:SF1">
    <property type="entry name" value="NUCLEOREDOXIN"/>
    <property type="match status" value="1"/>
</dbReference>
<dbReference type="Pfam" id="PF13905">
    <property type="entry name" value="Thioredoxin_8"/>
    <property type="match status" value="2"/>
</dbReference>
<dbReference type="SUPFAM" id="SSF52833">
    <property type="entry name" value="Thioredoxin-like"/>
    <property type="match status" value="3"/>
</dbReference>
<dbReference type="PROSITE" id="PS51352">
    <property type="entry name" value="THIOREDOXIN_2"/>
    <property type="match status" value="1"/>
</dbReference>
<name>NXN_DANRE</name>
<gene>
    <name type="primary">nxn</name>
    <name type="ORF">zgc:110449</name>
</gene>
<organism>
    <name type="scientific">Danio rerio</name>
    <name type="common">Zebrafish</name>
    <name type="synonym">Brachydanio rerio</name>
    <dbReference type="NCBI Taxonomy" id="7955"/>
    <lineage>
        <taxon>Eukaryota</taxon>
        <taxon>Metazoa</taxon>
        <taxon>Chordata</taxon>
        <taxon>Craniata</taxon>
        <taxon>Vertebrata</taxon>
        <taxon>Euteleostomi</taxon>
        <taxon>Actinopterygii</taxon>
        <taxon>Neopterygii</taxon>
        <taxon>Teleostei</taxon>
        <taxon>Ostariophysi</taxon>
        <taxon>Cypriniformes</taxon>
        <taxon>Danionidae</taxon>
        <taxon>Danioninae</taxon>
        <taxon>Danio</taxon>
    </lineage>
</organism>
<accession>Q503L9</accession>
<evidence type="ECO:0000250" key="1"/>
<evidence type="ECO:0000250" key="2">
    <source>
        <dbReference type="UniProtKB" id="P97346"/>
    </source>
</evidence>
<evidence type="ECO:0000255" key="3">
    <source>
        <dbReference type="PROSITE-ProRule" id="PRU00691"/>
    </source>
</evidence>
<evidence type="ECO:0000305" key="4"/>
<proteinExistence type="evidence at transcript level"/>
<protein>
    <recommendedName>
        <fullName>Nucleoredoxin</fullName>
        <ecNumber>1.8.1.8</ecNumber>
    </recommendedName>
</protein>
<reference key="1">
    <citation type="submission" date="2005-05" db="EMBL/GenBank/DDBJ databases">
        <authorList>
            <consortium name="NIH - Zebrafish Gene Collection (ZGC) project"/>
        </authorList>
    </citation>
    <scope>NUCLEOTIDE SEQUENCE [LARGE SCALE MRNA]</scope>
    <source>
        <tissue>Olfactory epithelium</tissue>
    </source>
</reference>